<gene>
    <name evidence="1" type="primary">rplE</name>
    <name type="ordered locus">BMA10247_3490</name>
</gene>
<name>RL5_BURM7</name>
<reference key="1">
    <citation type="journal article" date="2010" name="Genome Biol. Evol.">
        <title>Continuing evolution of Burkholderia mallei through genome reduction and large-scale rearrangements.</title>
        <authorList>
            <person name="Losada L."/>
            <person name="Ronning C.M."/>
            <person name="DeShazer D."/>
            <person name="Woods D."/>
            <person name="Fedorova N."/>
            <person name="Kim H.S."/>
            <person name="Shabalina S.A."/>
            <person name="Pearson T.R."/>
            <person name="Brinkac L."/>
            <person name="Tan P."/>
            <person name="Nandi T."/>
            <person name="Crabtree J."/>
            <person name="Badger J."/>
            <person name="Beckstrom-Sternberg S."/>
            <person name="Saqib M."/>
            <person name="Schutzer S.E."/>
            <person name="Keim P."/>
            <person name="Nierman W.C."/>
        </authorList>
    </citation>
    <scope>NUCLEOTIDE SEQUENCE [LARGE SCALE GENOMIC DNA]</scope>
    <source>
        <strain>NCTC 10247</strain>
    </source>
</reference>
<sequence length="179" mass="20027">MARFQEFYKEKVVPGLIEKFGYKSVMEVPRITKITLNMGLGEAVADKKIIENAVGDLTKIAGQKPVVTKARKAIAGFKIRQGYPIGAMVTLRGRAMYEFLDRFVTVALPRVRDFRGVSGRAFDGRGNYNIGVKEQIIFPEIDYDKIDALRGLNISITTTAKTDDEAKALLASFKFPFRN</sequence>
<accession>A3MRW6</accession>
<organism>
    <name type="scientific">Burkholderia mallei (strain NCTC 10247)</name>
    <dbReference type="NCBI Taxonomy" id="320389"/>
    <lineage>
        <taxon>Bacteria</taxon>
        <taxon>Pseudomonadati</taxon>
        <taxon>Pseudomonadota</taxon>
        <taxon>Betaproteobacteria</taxon>
        <taxon>Burkholderiales</taxon>
        <taxon>Burkholderiaceae</taxon>
        <taxon>Burkholderia</taxon>
        <taxon>pseudomallei group</taxon>
    </lineage>
</organism>
<feature type="chain" id="PRO_1000052704" description="Large ribosomal subunit protein uL5">
    <location>
        <begin position="1"/>
        <end position="179"/>
    </location>
</feature>
<proteinExistence type="inferred from homology"/>
<comment type="function">
    <text evidence="1">This is one of the proteins that bind and probably mediate the attachment of the 5S RNA into the large ribosomal subunit, where it forms part of the central protuberance. In the 70S ribosome it contacts protein S13 of the 30S subunit (bridge B1b), connecting the 2 subunits; this bridge is implicated in subunit movement. Contacts the P site tRNA; the 5S rRNA and some of its associated proteins might help stabilize positioning of ribosome-bound tRNAs.</text>
</comment>
<comment type="subunit">
    <text evidence="1">Part of the 50S ribosomal subunit; part of the 5S rRNA/L5/L18/L25 subcomplex. Contacts the 5S rRNA and the P site tRNA. Forms a bridge to the 30S subunit in the 70S ribosome.</text>
</comment>
<comment type="similarity">
    <text evidence="1">Belongs to the universal ribosomal protein uL5 family.</text>
</comment>
<evidence type="ECO:0000255" key="1">
    <source>
        <dbReference type="HAMAP-Rule" id="MF_01333"/>
    </source>
</evidence>
<evidence type="ECO:0000305" key="2"/>
<dbReference type="EMBL" id="CP000548">
    <property type="protein sequence ID" value="ABO07099.1"/>
    <property type="molecule type" value="Genomic_DNA"/>
</dbReference>
<dbReference type="RefSeq" id="WP_004202757.1">
    <property type="nucleotide sequence ID" value="NZ_CP007802.1"/>
</dbReference>
<dbReference type="SMR" id="A3MRW6"/>
<dbReference type="GeneID" id="93061820"/>
<dbReference type="KEGG" id="bmaz:BM44_3029"/>
<dbReference type="KEGG" id="bmn:BMA10247_3490"/>
<dbReference type="PATRIC" id="fig|320389.8.peg.3401"/>
<dbReference type="GO" id="GO:1990904">
    <property type="term" value="C:ribonucleoprotein complex"/>
    <property type="evidence" value="ECO:0007669"/>
    <property type="project" value="UniProtKB-KW"/>
</dbReference>
<dbReference type="GO" id="GO:0005840">
    <property type="term" value="C:ribosome"/>
    <property type="evidence" value="ECO:0007669"/>
    <property type="project" value="UniProtKB-KW"/>
</dbReference>
<dbReference type="GO" id="GO:0019843">
    <property type="term" value="F:rRNA binding"/>
    <property type="evidence" value="ECO:0007669"/>
    <property type="project" value="UniProtKB-UniRule"/>
</dbReference>
<dbReference type="GO" id="GO:0003735">
    <property type="term" value="F:structural constituent of ribosome"/>
    <property type="evidence" value="ECO:0007669"/>
    <property type="project" value="InterPro"/>
</dbReference>
<dbReference type="GO" id="GO:0000049">
    <property type="term" value="F:tRNA binding"/>
    <property type="evidence" value="ECO:0007669"/>
    <property type="project" value="UniProtKB-UniRule"/>
</dbReference>
<dbReference type="GO" id="GO:0006412">
    <property type="term" value="P:translation"/>
    <property type="evidence" value="ECO:0007669"/>
    <property type="project" value="UniProtKB-UniRule"/>
</dbReference>
<dbReference type="FunFam" id="3.30.1440.10:FF:000001">
    <property type="entry name" value="50S ribosomal protein L5"/>
    <property type="match status" value="1"/>
</dbReference>
<dbReference type="Gene3D" id="3.30.1440.10">
    <property type="match status" value="1"/>
</dbReference>
<dbReference type="HAMAP" id="MF_01333_B">
    <property type="entry name" value="Ribosomal_uL5_B"/>
    <property type="match status" value="1"/>
</dbReference>
<dbReference type="InterPro" id="IPR002132">
    <property type="entry name" value="Ribosomal_uL5"/>
</dbReference>
<dbReference type="InterPro" id="IPR020930">
    <property type="entry name" value="Ribosomal_uL5_bac-type"/>
</dbReference>
<dbReference type="InterPro" id="IPR031309">
    <property type="entry name" value="Ribosomal_uL5_C"/>
</dbReference>
<dbReference type="InterPro" id="IPR020929">
    <property type="entry name" value="Ribosomal_uL5_CS"/>
</dbReference>
<dbReference type="InterPro" id="IPR022803">
    <property type="entry name" value="Ribosomal_uL5_dom_sf"/>
</dbReference>
<dbReference type="InterPro" id="IPR031310">
    <property type="entry name" value="Ribosomal_uL5_N"/>
</dbReference>
<dbReference type="NCBIfam" id="NF000585">
    <property type="entry name" value="PRK00010.1"/>
    <property type="match status" value="1"/>
</dbReference>
<dbReference type="PANTHER" id="PTHR11994">
    <property type="entry name" value="60S RIBOSOMAL PROTEIN L11-RELATED"/>
    <property type="match status" value="1"/>
</dbReference>
<dbReference type="Pfam" id="PF00281">
    <property type="entry name" value="Ribosomal_L5"/>
    <property type="match status" value="1"/>
</dbReference>
<dbReference type="Pfam" id="PF00673">
    <property type="entry name" value="Ribosomal_L5_C"/>
    <property type="match status" value="1"/>
</dbReference>
<dbReference type="PIRSF" id="PIRSF002161">
    <property type="entry name" value="Ribosomal_L5"/>
    <property type="match status" value="1"/>
</dbReference>
<dbReference type="SUPFAM" id="SSF55282">
    <property type="entry name" value="RL5-like"/>
    <property type="match status" value="1"/>
</dbReference>
<dbReference type="PROSITE" id="PS00358">
    <property type="entry name" value="RIBOSOMAL_L5"/>
    <property type="match status" value="1"/>
</dbReference>
<protein>
    <recommendedName>
        <fullName evidence="1">Large ribosomal subunit protein uL5</fullName>
    </recommendedName>
    <alternativeName>
        <fullName evidence="2">50S ribosomal protein L5</fullName>
    </alternativeName>
</protein>
<keyword id="KW-0687">Ribonucleoprotein</keyword>
<keyword id="KW-0689">Ribosomal protein</keyword>
<keyword id="KW-0694">RNA-binding</keyword>
<keyword id="KW-0699">rRNA-binding</keyword>
<keyword id="KW-0820">tRNA-binding</keyword>